<feature type="chain" id="PRO_0000143008" description="Porphobilinogen deaminase">
    <location>
        <begin position="1"/>
        <end position="312"/>
    </location>
</feature>
<feature type="modified residue" description="S-(dipyrrolylmethanemethyl)cysteine" evidence="1">
    <location>
        <position position="243"/>
    </location>
</feature>
<gene>
    <name evidence="1" type="primary">hemC</name>
    <name type="ordered locus">VV0081</name>
</gene>
<accession>Q7MQC7</accession>
<organism>
    <name type="scientific">Vibrio vulnificus (strain YJ016)</name>
    <dbReference type="NCBI Taxonomy" id="196600"/>
    <lineage>
        <taxon>Bacteria</taxon>
        <taxon>Pseudomonadati</taxon>
        <taxon>Pseudomonadota</taxon>
        <taxon>Gammaproteobacteria</taxon>
        <taxon>Vibrionales</taxon>
        <taxon>Vibrionaceae</taxon>
        <taxon>Vibrio</taxon>
    </lineage>
</organism>
<sequence length="312" mass="34327">MTHSTPIRIATRKSPLALWQAYYVKDALQKAHPGLEVELVTMVTKGDVILDTPLAKVGGKGLFVKELEVAMLEGRADLAVHSMKDVPVDFPEGLGLVTICEREDPRDAFVSNTYHHVDELPQGAVVGTCSLRRQCQLKAYRPDLVIKELRGNVGTRLSKLDAGEYDAIILAAAGLKRLELEERIRSFIEPEQSLPAVGQGAVGIECRTNDERILKLLEPLNHADTADRVKCERAMNLTLEGGCQVPIGSYALLEGDEIWLRALVGEPDGSEIVRGEIRGPRAQAEQLGVQLANQLLDEGAREILTKLYQDHE</sequence>
<comment type="function">
    <text evidence="1">Tetrapolymerization of the monopyrrole PBG into the hydroxymethylbilane pre-uroporphyrinogen in several discrete steps.</text>
</comment>
<comment type="catalytic activity">
    <reaction evidence="1">
        <text>4 porphobilinogen + H2O = hydroxymethylbilane + 4 NH4(+)</text>
        <dbReference type="Rhea" id="RHEA:13185"/>
        <dbReference type="ChEBI" id="CHEBI:15377"/>
        <dbReference type="ChEBI" id="CHEBI:28938"/>
        <dbReference type="ChEBI" id="CHEBI:57845"/>
        <dbReference type="ChEBI" id="CHEBI:58126"/>
        <dbReference type="EC" id="2.5.1.61"/>
    </reaction>
</comment>
<comment type="cofactor">
    <cofactor evidence="1">
        <name>dipyrromethane</name>
        <dbReference type="ChEBI" id="CHEBI:60342"/>
    </cofactor>
    <text evidence="1">Binds 1 dipyrromethane group covalently.</text>
</comment>
<comment type="pathway">
    <text evidence="1">Porphyrin-containing compound metabolism; protoporphyrin-IX biosynthesis; coproporphyrinogen-III from 5-aminolevulinate: step 2/4.</text>
</comment>
<comment type="subunit">
    <text evidence="1">Monomer.</text>
</comment>
<comment type="miscellaneous">
    <text evidence="1">The porphobilinogen subunits are added to the dipyrromethane group.</text>
</comment>
<comment type="similarity">
    <text evidence="1">Belongs to the HMBS family.</text>
</comment>
<dbReference type="EC" id="2.5.1.61" evidence="1"/>
<dbReference type="EMBL" id="BA000037">
    <property type="protein sequence ID" value="BAC92845.1"/>
    <property type="molecule type" value="Genomic_DNA"/>
</dbReference>
<dbReference type="RefSeq" id="WP_011079138.1">
    <property type="nucleotide sequence ID" value="NC_005139.1"/>
</dbReference>
<dbReference type="SMR" id="Q7MQC7"/>
<dbReference type="STRING" id="672.VV93_v1c00730"/>
<dbReference type="KEGG" id="vvy:VV0081"/>
<dbReference type="eggNOG" id="COG0181">
    <property type="taxonomic scope" value="Bacteria"/>
</dbReference>
<dbReference type="HOGENOM" id="CLU_019704_0_2_6"/>
<dbReference type="UniPathway" id="UPA00251">
    <property type="reaction ID" value="UER00319"/>
</dbReference>
<dbReference type="Proteomes" id="UP000002675">
    <property type="component" value="Chromosome I"/>
</dbReference>
<dbReference type="GO" id="GO:0005737">
    <property type="term" value="C:cytoplasm"/>
    <property type="evidence" value="ECO:0007669"/>
    <property type="project" value="TreeGrafter"/>
</dbReference>
<dbReference type="GO" id="GO:0004418">
    <property type="term" value="F:hydroxymethylbilane synthase activity"/>
    <property type="evidence" value="ECO:0007669"/>
    <property type="project" value="UniProtKB-UniRule"/>
</dbReference>
<dbReference type="GO" id="GO:0006782">
    <property type="term" value="P:protoporphyrinogen IX biosynthetic process"/>
    <property type="evidence" value="ECO:0007669"/>
    <property type="project" value="UniProtKB-UniRule"/>
</dbReference>
<dbReference type="CDD" id="cd13646">
    <property type="entry name" value="PBP2_EcHMBS_like"/>
    <property type="match status" value="1"/>
</dbReference>
<dbReference type="FunFam" id="3.30.160.40:FF:000002">
    <property type="entry name" value="Porphobilinogen deaminase"/>
    <property type="match status" value="1"/>
</dbReference>
<dbReference type="FunFam" id="3.40.190.10:FF:000004">
    <property type="entry name" value="Porphobilinogen deaminase"/>
    <property type="match status" value="1"/>
</dbReference>
<dbReference type="FunFam" id="3.40.190.10:FF:000005">
    <property type="entry name" value="Porphobilinogen deaminase"/>
    <property type="match status" value="1"/>
</dbReference>
<dbReference type="Gene3D" id="3.40.190.10">
    <property type="entry name" value="Periplasmic binding protein-like II"/>
    <property type="match status" value="2"/>
</dbReference>
<dbReference type="Gene3D" id="3.30.160.40">
    <property type="entry name" value="Porphobilinogen deaminase, C-terminal domain"/>
    <property type="match status" value="1"/>
</dbReference>
<dbReference type="HAMAP" id="MF_00260">
    <property type="entry name" value="Porphobil_deam"/>
    <property type="match status" value="1"/>
</dbReference>
<dbReference type="InterPro" id="IPR000860">
    <property type="entry name" value="HemC"/>
</dbReference>
<dbReference type="InterPro" id="IPR022419">
    <property type="entry name" value="Porphobilin_deaminase_cofac_BS"/>
</dbReference>
<dbReference type="InterPro" id="IPR022417">
    <property type="entry name" value="Porphobilin_deaminase_N"/>
</dbReference>
<dbReference type="InterPro" id="IPR022418">
    <property type="entry name" value="Porphobilinogen_deaminase_C"/>
</dbReference>
<dbReference type="InterPro" id="IPR036803">
    <property type="entry name" value="Porphobilinogen_deaminase_C_sf"/>
</dbReference>
<dbReference type="NCBIfam" id="TIGR00212">
    <property type="entry name" value="hemC"/>
    <property type="match status" value="1"/>
</dbReference>
<dbReference type="PANTHER" id="PTHR11557">
    <property type="entry name" value="PORPHOBILINOGEN DEAMINASE"/>
    <property type="match status" value="1"/>
</dbReference>
<dbReference type="PANTHER" id="PTHR11557:SF0">
    <property type="entry name" value="PORPHOBILINOGEN DEAMINASE"/>
    <property type="match status" value="1"/>
</dbReference>
<dbReference type="Pfam" id="PF01379">
    <property type="entry name" value="Porphobil_deam"/>
    <property type="match status" value="1"/>
</dbReference>
<dbReference type="Pfam" id="PF03900">
    <property type="entry name" value="Porphobil_deamC"/>
    <property type="match status" value="1"/>
</dbReference>
<dbReference type="PIRSF" id="PIRSF001438">
    <property type="entry name" value="4pyrrol_synth_OHMeBilane_synth"/>
    <property type="match status" value="1"/>
</dbReference>
<dbReference type="PRINTS" id="PR00151">
    <property type="entry name" value="PORPHBDMNASE"/>
</dbReference>
<dbReference type="SUPFAM" id="SSF53850">
    <property type="entry name" value="Periplasmic binding protein-like II"/>
    <property type="match status" value="1"/>
</dbReference>
<dbReference type="SUPFAM" id="SSF54782">
    <property type="entry name" value="Porphobilinogen deaminase (hydroxymethylbilane synthase), C-terminal domain"/>
    <property type="match status" value="1"/>
</dbReference>
<dbReference type="PROSITE" id="PS00533">
    <property type="entry name" value="PORPHOBILINOGEN_DEAM"/>
    <property type="match status" value="1"/>
</dbReference>
<keyword id="KW-0627">Porphyrin biosynthesis</keyword>
<keyword id="KW-0808">Transferase</keyword>
<proteinExistence type="inferred from homology"/>
<evidence type="ECO:0000255" key="1">
    <source>
        <dbReference type="HAMAP-Rule" id="MF_00260"/>
    </source>
</evidence>
<reference key="1">
    <citation type="journal article" date="2003" name="Genome Res.">
        <title>Comparative genome analysis of Vibrio vulnificus, a marine pathogen.</title>
        <authorList>
            <person name="Chen C.-Y."/>
            <person name="Wu K.-M."/>
            <person name="Chang Y.-C."/>
            <person name="Chang C.-H."/>
            <person name="Tsai H.-C."/>
            <person name="Liao T.-L."/>
            <person name="Liu Y.-M."/>
            <person name="Chen H.-J."/>
            <person name="Shen A.B.-T."/>
            <person name="Li J.-C."/>
            <person name="Su T.-L."/>
            <person name="Shao C.-P."/>
            <person name="Lee C.-T."/>
            <person name="Hor L.-I."/>
            <person name="Tsai S.-F."/>
        </authorList>
    </citation>
    <scope>NUCLEOTIDE SEQUENCE [LARGE SCALE GENOMIC DNA]</scope>
    <source>
        <strain>YJ016</strain>
    </source>
</reference>
<protein>
    <recommendedName>
        <fullName evidence="1">Porphobilinogen deaminase</fullName>
        <shortName evidence="1">PBG</shortName>
        <ecNumber evidence="1">2.5.1.61</ecNumber>
    </recommendedName>
    <alternativeName>
        <fullName evidence="1">Hydroxymethylbilane synthase</fullName>
        <shortName evidence="1">HMBS</shortName>
    </alternativeName>
    <alternativeName>
        <fullName evidence="1">Pre-uroporphyrinogen synthase</fullName>
    </alternativeName>
</protein>
<name>HEM3_VIBVY</name>